<feature type="chain" id="PRO_0000229237" description="Ribosome maturation factor RimP">
    <location>
        <begin position="1"/>
        <end position="152"/>
    </location>
</feature>
<name>RIMP_PECAS</name>
<comment type="function">
    <text evidence="1">Required for maturation of 30S ribosomal subunits.</text>
</comment>
<comment type="subcellular location">
    <subcellularLocation>
        <location evidence="1">Cytoplasm</location>
    </subcellularLocation>
</comment>
<comment type="similarity">
    <text evidence="1">Belongs to the RimP family.</text>
</comment>
<comment type="sequence caution" evidence="2">
    <conflict type="erroneous initiation">
        <sequence resource="EMBL-CDS" id="CAG73625"/>
    </conflict>
</comment>
<sequence length="152" mass="16801">MDLSTLEQKLTEMISAPVAALGYELVGIEFIRSRQSTLRIYIDSEDGITVDDCADVSHQVSAVLDVEDPITVAYNLEVSSPGLERPLFTAAHYLHFVGEEVAVVLRMAVQNRRKWLGVIKAVDGEMITITVEGKDEVFALSNIQKANLVPHF</sequence>
<organism>
    <name type="scientific">Pectobacterium atrosepticum (strain SCRI 1043 / ATCC BAA-672)</name>
    <name type="common">Erwinia carotovora subsp. atroseptica</name>
    <dbReference type="NCBI Taxonomy" id="218491"/>
    <lineage>
        <taxon>Bacteria</taxon>
        <taxon>Pseudomonadati</taxon>
        <taxon>Pseudomonadota</taxon>
        <taxon>Gammaproteobacteria</taxon>
        <taxon>Enterobacterales</taxon>
        <taxon>Pectobacteriaceae</taxon>
        <taxon>Pectobacterium</taxon>
    </lineage>
</organism>
<reference key="1">
    <citation type="journal article" date="2004" name="Proc. Natl. Acad. Sci. U.S.A.">
        <title>Genome sequence of the enterobacterial phytopathogen Erwinia carotovora subsp. atroseptica and characterization of virulence factors.</title>
        <authorList>
            <person name="Bell K.S."/>
            <person name="Sebaihia M."/>
            <person name="Pritchard L."/>
            <person name="Holden M.T.G."/>
            <person name="Hyman L.J."/>
            <person name="Holeva M.C."/>
            <person name="Thomson N.R."/>
            <person name="Bentley S.D."/>
            <person name="Churcher L.J.C."/>
            <person name="Mungall K."/>
            <person name="Atkin R."/>
            <person name="Bason N."/>
            <person name="Brooks K."/>
            <person name="Chillingworth T."/>
            <person name="Clark K."/>
            <person name="Doggett J."/>
            <person name="Fraser A."/>
            <person name="Hance Z."/>
            <person name="Hauser H."/>
            <person name="Jagels K."/>
            <person name="Moule S."/>
            <person name="Norbertczak H."/>
            <person name="Ormond D."/>
            <person name="Price C."/>
            <person name="Quail M.A."/>
            <person name="Sanders M."/>
            <person name="Walker D."/>
            <person name="Whitehead S."/>
            <person name="Salmond G.P.C."/>
            <person name="Birch P.R.J."/>
            <person name="Parkhill J."/>
            <person name="Toth I.K."/>
        </authorList>
    </citation>
    <scope>NUCLEOTIDE SEQUENCE [LARGE SCALE GENOMIC DNA]</scope>
    <source>
        <strain>SCRI 1043 / ATCC BAA-672</strain>
    </source>
</reference>
<dbReference type="EMBL" id="BX950851">
    <property type="protein sequence ID" value="CAG73625.1"/>
    <property type="status" value="ALT_INIT"/>
    <property type="molecule type" value="Genomic_DNA"/>
</dbReference>
<dbReference type="SMR" id="Q6D9A7"/>
<dbReference type="STRING" id="218491.ECA0710"/>
<dbReference type="KEGG" id="eca:ECA0710"/>
<dbReference type="eggNOG" id="COG0779">
    <property type="taxonomic scope" value="Bacteria"/>
</dbReference>
<dbReference type="HOGENOM" id="CLU_070525_1_1_6"/>
<dbReference type="Proteomes" id="UP000007966">
    <property type="component" value="Chromosome"/>
</dbReference>
<dbReference type="GO" id="GO:0005829">
    <property type="term" value="C:cytosol"/>
    <property type="evidence" value="ECO:0007669"/>
    <property type="project" value="TreeGrafter"/>
</dbReference>
<dbReference type="GO" id="GO:0000028">
    <property type="term" value="P:ribosomal small subunit assembly"/>
    <property type="evidence" value="ECO:0007669"/>
    <property type="project" value="TreeGrafter"/>
</dbReference>
<dbReference type="GO" id="GO:0006412">
    <property type="term" value="P:translation"/>
    <property type="evidence" value="ECO:0007669"/>
    <property type="project" value="TreeGrafter"/>
</dbReference>
<dbReference type="CDD" id="cd01734">
    <property type="entry name" value="YlxS_C"/>
    <property type="match status" value="1"/>
</dbReference>
<dbReference type="FunFam" id="2.30.30.180:FF:000001">
    <property type="entry name" value="Ribosome maturation factor RimP"/>
    <property type="match status" value="1"/>
</dbReference>
<dbReference type="FunFam" id="3.30.300.70:FF:000001">
    <property type="entry name" value="Ribosome maturation factor RimP"/>
    <property type="match status" value="1"/>
</dbReference>
<dbReference type="Gene3D" id="2.30.30.180">
    <property type="entry name" value="Ribosome maturation factor RimP, C-terminal domain"/>
    <property type="match status" value="1"/>
</dbReference>
<dbReference type="Gene3D" id="3.30.300.70">
    <property type="entry name" value="RimP-like superfamily, N-terminal"/>
    <property type="match status" value="1"/>
</dbReference>
<dbReference type="HAMAP" id="MF_01077">
    <property type="entry name" value="RimP"/>
    <property type="match status" value="1"/>
</dbReference>
<dbReference type="InterPro" id="IPR003728">
    <property type="entry name" value="Ribosome_maturation_RimP"/>
</dbReference>
<dbReference type="InterPro" id="IPR028998">
    <property type="entry name" value="RimP_C"/>
</dbReference>
<dbReference type="InterPro" id="IPR036847">
    <property type="entry name" value="RimP_C_sf"/>
</dbReference>
<dbReference type="InterPro" id="IPR028989">
    <property type="entry name" value="RimP_N"/>
</dbReference>
<dbReference type="InterPro" id="IPR035956">
    <property type="entry name" value="RimP_N_sf"/>
</dbReference>
<dbReference type="NCBIfam" id="NF000927">
    <property type="entry name" value="PRK00092.1-1"/>
    <property type="match status" value="1"/>
</dbReference>
<dbReference type="PANTHER" id="PTHR33867">
    <property type="entry name" value="RIBOSOME MATURATION FACTOR RIMP"/>
    <property type="match status" value="1"/>
</dbReference>
<dbReference type="PANTHER" id="PTHR33867:SF1">
    <property type="entry name" value="RIBOSOME MATURATION FACTOR RIMP"/>
    <property type="match status" value="1"/>
</dbReference>
<dbReference type="Pfam" id="PF17384">
    <property type="entry name" value="DUF150_C"/>
    <property type="match status" value="1"/>
</dbReference>
<dbReference type="Pfam" id="PF02576">
    <property type="entry name" value="RimP_N"/>
    <property type="match status" value="1"/>
</dbReference>
<dbReference type="SUPFAM" id="SSF74942">
    <property type="entry name" value="YhbC-like, C-terminal domain"/>
    <property type="match status" value="1"/>
</dbReference>
<dbReference type="SUPFAM" id="SSF75420">
    <property type="entry name" value="YhbC-like, N-terminal domain"/>
    <property type="match status" value="1"/>
</dbReference>
<proteinExistence type="inferred from homology"/>
<protein>
    <recommendedName>
        <fullName evidence="1">Ribosome maturation factor RimP</fullName>
    </recommendedName>
</protein>
<accession>Q6D9A7</accession>
<gene>
    <name evidence="1" type="primary">rimP</name>
    <name type="ordered locus">ECA0710</name>
</gene>
<evidence type="ECO:0000255" key="1">
    <source>
        <dbReference type="HAMAP-Rule" id="MF_01077"/>
    </source>
</evidence>
<evidence type="ECO:0000305" key="2"/>
<keyword id="KW-0963">Cytoplasm</keyword>
<keyword id="KW-1185">Reference proteome</keyword>
<keyword id="KW-0690">Ribosome biogenesis</keyword>